<name>KPK2_ARATH</name>
<sequence>MVSSQCSVANKNQTGKPFQKHLSLSISPPKSVLGDNLELQFSDVFGPMPEANSEEACDVAYDEPAVVYSRSHSLVGPSLVVSHSLKMNKLTLRETEDSVDLVECVEGESIKENDEFSGNDDTDSEKSPEEVSGVVGIEDFEVLKVVGQGAFGKVYQVRKKDTSEIYAMKVMRKDKIVEKNHAEYMKAERDILTKIDHPFIVQLKYSFQTKYRLYLVLDFINGGHLFFQLYHQGLFREDLARVYTAEIVSAVSHLHEKGIMHRDLKPENILMDVDGHVMLTDFGLAKEFEENTRSNSMCGTTEYMAPEIVRGKGHDKAADWWSVGILLYEMLTGKPPFLGSKGKIQQKIVKDKIKLPQFLSNEAHALLKGLLQKEPERRLGSGPSGAEEIKKHKWFKAINWKKLEAREVQPSFKPAVSGRQCIANFDKCWTDMSVLDSPASSPNSDAKANPFTNFTYVRPPHSFLHRTTSNL</sequence>
<evidence type="ECO:0000250" key="1"/>
<evidence type="ECO:0000250" key="2">
    <source>
        <dbReference type="UniProtKB" id="P42818"/>
    </source>
</evidence>
<evidence type="ECO:0000255" key="3">
    <source>
        <dbReference type="PROSITE-ProRule" id="PRU00159"/>
    </source>
</evidence>
<evidence type="ECO:0000255" key="4">
    <source>
        <dbReference type="PROSITE-ProRule" id="PRU00618"/>
    </source>
</evidence>
<evidence type="ECO:0000255" key="5">
    <source>
        <dbReference type="PROSITE-ProRule" id="PRU10027"/>
    </source>
</evidence>
<evidence type="ECO:0000256" key="6">
    <source>
        <dbReference type="SAM" id="MobiDB-lite"/>
    </source>
</evidence>
<evidence type="ECO:0000269" key="7">
    <source>
    </source>
</evidence>
<evidence type="ECO:0000269" key="8">
    <source>
    </source>
</evidence>
<evidence type="ECO:0000269" key="9">
    <source>
    </source>
</evidence>
<evidence type="ECO:0000269" key="10">
    <source>
    </source>
</evidence>
<evidence type="ECO:0000305" key="11"/>
<reference key="1">
    <citation type="journal article" date="1995" name="FEBS Lett.">
        <title>Two genes that encode ribosomal-protein S6 kinase homologs are induced by cold or salinity stress in Arabidopsis thaliana.</title>
        <authorList>
            <person name="Mizoguchi T."/>
            <person name="Hayashida N."/>
            <person name="Yamaguchi-Shinozaki K."/>
            <person name="Kamada H."/>
            <person name="Shinozaki K."/>
        </authorList>
    </citation>
    <scope>NUCLEOTIDE SEQUENCE [MRNA]</scope>
    <source>
        <strain>cv. Columbia</strain>
    </source>
</reference>
<reference key="2">
    <citation type="journal article" date="2000" name="Nature">
        <title>Sequence and analysis of chromosome 3 of the plant Arabidopsis thaliana.</title>
        <authorList>
            <person name="Salanoubat M."/>
            <person name="Lemcke K."/>
            <person name="Rieger M."/>
            <person name="Ansorge W."/>
            <person name="Unseld M."/>
            <person name="Fartmann B."/>
            <person name="Valle G."/>
            <person name="Bloecker H."/>
            <person name="Perez-Alonso M."/>
            <person name="Obermaier B."/>
            <person name="Delseny M."/>
            <person name="Boutry M."/>
            <person name="Grivell L.A."/>
            <person name="Mache R."/>
            <person name="Puigdomenech P."/>
            <person name="De Simone V."/>
            <person name="Choisne N."/>
            <person name="Artiguenave F."/>
            <person name="Robert C."/>
            <person name="Brottier P."/>
            <person name="Wincker P."/>
            <person name="Cattolico L."/>
            <person name="Weissenbach J."/>
            <person name="Saurin W."/>
            <person name="Quetier F."/>
            <person name="Schaefer M."/>
            <person name="Mueller-Auer S."/>
            <person name="Gabel C."/>
            <person name="Fuchs M."/>
            <person name="Benes V."/>
            <person name="Wurmbach E."/>
            <person name="Drzonek H."/>
            <person name="Erfle H."/>
            <person name="Jordan N."/>
            <person name="Bangert S."/>
            <person name="Wiedelmann R."/>
            <person name="Kranz H."/>
            <person name="Voss H."/>
            <person name="Holland R."/>
            <person name="Brandt P."/>
            <person name="Nyakatura G."/>
            <person name="Vezzi A."/>
            <person name="D'Angelo M."/>
            <person name="Pallavicini A."/>
            <person name="Toppo S."/>
            <person name="Simionati B."/>
            <person name="Conrad A."/>
            <person name="Hornischer K."/>
            <person name="Kauer G."/>
            <person name="Loehnert T.-H."/>
            <person name="Nordsiek G."/>
            <person name="Reichelt J."/>
            <person name="Scharfe M."/>
            <person name="Schoen O."/>
            <person name="Bargues M."/>
            <person name="Terol J."/>
            <person name="Climent J."/>
            <person name="Navarro P."/>
            <person name="Collado C."/>
            <person name="Perez-Perez A."/>
            <person name="Ottenwaelder B."/>
            <person name="Duchemin D."/>
            <person name="Cooke R."/>
            <person name="Laudie M."/>
            <person name="Berger-Llauro C."/>
            <person name="Purnelle B."/>
            <person name="Masuy D."/>
            <person name="de Haan M."/>
            <person name="Maarse A.C."/>
            <person name="Alcaraz J.-P."/>
            <person name="Cottet A."/>
            <person name="Casacuberta E."/>
            <person name="Monfort A."/>
            <person name="Argiriou A."/>
            <person name="Flores M."/>
            <person name="Liguori R."/>
            <person name="Vitale D."/>
            <person name="Mannhaupt G."/>
            <person name="Haase D."/>
            <person name="Schoof H."/>
            <person name="Rudd S."/>
            <person name="Zaccaria P."/>
            <person name="Mewes H.-W."/>
            <person name="Mayer K.F.X."/>
            <person name="Kaul S."/>
            <person name="Town C.D."/>
            <person name="Koo H.L."/>
            <person name="Tallon L.J."/>
            <person name="Jenkins J."/>
            <person name="Rooney T."/>
            <person name="Rizzo M."/>
            <person name="Walts A."/>
            <person name="Utterback T."/>
            <person name="Fujii C.Y."/>
            <person name="Shea T.P."/>
            <person name="Creasy T.H."/>
            <person name="Haas B."/>
            <person name="Maiti R."/>
            <person name="Wu D."/>
            <person name="Peterson J."/>
            <person name="Van Aken S."/>
            <person name="Pai G."/>
            <person name="Militscher J."/>
            <person name="Sellers P."/>
            <person name="Gill J.E."/>
            <person name="Feldblyum T.V."/>
            <person name="Preuss D."/>
            <person name="Lin X."/>
            <person name="Nierman W.C."/>
            <person name="Salzberg S.L."/>
            <person name="White O."/>
            <person name="Venter J.C."/>
            <person name="Fraser C.M."/>
            <person name="Kaneko T."/>
            <person name="Nakamura Y."/>
            <person name="Sato S."/>
            <person name="Kato T."/>
            <person name="Asamizu E."/>
            <person name="Sasamoto S."/>
            <person name="Kimura T."/>
            <person name="Idesawa K."/>
            <person name="Kawashima K."/>
            <person name="Kishida Y."/>
            <person name="Kiyokawa C."/>
            <person name="Kohara M."/>
            <person name="Matsumoto M."/>
            <person name="Matsuno A."/>
            <person name="Muraki A."/>
            <person name="Nakayama S."/>
            <person name="Nakazaki N."/>
            <person name="Shinpo S."/>
            <person name="Takeuchi C."/>
            <person name="Wada T."/>
            <person name="Watanabe A."/>
            <person name="Yamada M."/>
            <person name="Yasuda M."/>
            <person name="Tabata S."/>
        </authorList>
    </citation>
    <scope>NUCLEOTIDE SEQUENCE [LARGE SCALE GENOMIC DNA]</scope>
    <source>
        <strain>cv. Columbia</strain>
    </source>
</reference>
<reference key="3">
    <citation type="journal article" date="2017" name="Plant J.">
        <title>Araport11: a complete reannotation of the Arabidopsis thaliana reference genome.</title>
        <authorList>
            <person name="Cheng C.Y."/>
            <person name="Krishnakumar V."/>
            <person name="Chan A.P."/>
            <person name="Thibaud-Nissen F."/>
            <person name="Schobel S."/>
            <person name="Town C.D."/>
        </authorList>
    </citation>
    <scope>GENOME REANNOTATION</scope>
    <source>
        <strain>cv. Columbia</strain>
    </source>
</reference>
<reference key="4">
    <citation type="journal article" date="2003" name="Science">
        <title>Empirical analysis of transcriptional activity in the Arabidopsis genome.</title>
        <authorList>
            <person name="Yamada K."/>
            <person name="Lim J."/>
            <person name="Dale J.M."/>
            <person name="Chen H."/>
            <person name="Shinn P."/>
            <person name="Palm C.J."/>
            <person name="Southwick A.M."/>
            <person name="Wu H.C."/>
            <person name="Kim C.J."/>
            <person name="Nguyen M."/>
            <person name="Pham P.K."/>
            <person name="Cheuk R.F."/>
            <person name="Karlin-Newmann G."/>
            <person name="Liu S.X."/>
            <person name="Lam B."/>
            <person name="Sakano H."/>
            <person name="Wu T."/>
            <person name="Yu G."/>
            <person name="Miranda M."/>
            <person name="Quach H.L."/>
            <person name="Tripp M."/>
            <person name="Chang C.H."/>
            <person name="Lee J.M."/>
            <person name="Toriumi M.J."/>
            <person name="Chan M.M."/>
            <person name="Tang C.C."/>
            <person name="Onodera C.S."/>
            <person name="Deng J.M."/>
            <person name="Akiyama K."/>
            <person name="Ansari Y."/>
            <person name="Arakawa T."/>
            <person name="Banh J."/>
            <person name="Banno F."/>
            <person name="Bowser L."/>
            <person name="Brooks S.Y."/>
            <person name="Carninci P."/>
            <person name="Chao Q."/>
            <person name="Choy N."/>
            <person name="Enju A."/>
            <person name="Goldsmith A.D."/>
            <person name="Gurjal M."/>
            <person name="Hansen N.F."/>
            <person name="Hayashizaki Y."/>
            <person name="Johnson-Hopson C."/>
            <person name="Hsuan V.W."/>
            <person name="Iida K."/>
            <person name="Karnes M."/>
            <person name="Khan S."/>
            <person name="Koesema E."/>
            <person name="Ishida J."/>
            <person name="Jiang P.X."/>
            <person name="Jones T."/>
            <person name="Kawai J."/>
            <person name="Kamiya A."/>
            <person name="Meyers C."/>
            <person name="Nakajima M."/>
            <person name="Narusaka M."/>
            <person name="Seki M."/>
            <person name="Sakurai T."/>
            <person name="Satou M."/>
            <person name="Tamse R."/>
            <person name="Vaysberg M."/>
            <person name="Wallender E.K."/>
            <person name="Wong C."/>
            <person name="Yamamura Y."/>
            <person name="Yuan S."/>
            <person name="Shinozaki K."/>
            <person name="Davis R.W."/>
            <person name="Theologis A."/>
            <person name="Ecker J.R."/>
        </authorList>
    </citation>
    <scope>NUCLEOTIDE SEQUENCE [LARGE SCALE MRNA]</scope>
    <source>
        <strain>cv. Columbia</strain>
    </source>
</reference>
<reference key="5">
    <citation type="journal article" date="2009" name="DNA Res.">
        <title>Analysis of multiple occurrences of alternative splicing events in Arabidopsis thaliana using novel sequenced full-length cDNAs.</title>
        <authorList>
            <person name="Iida K."/>
            <person name="Fukami-Kobayashi K."/>
            <person name="Toyoda A."/>
            <person name="Sakaki Y."/>
            <person name="Kobayashi M."/>
            <person name="Seki M."/>
            <person name="Shinozaki K."/>
        </authorList>
    </citation>
    <scope>NUCLEOTIDE SEQUENCE [LARGE SCALE MRNA]</scope>
    <source>
        <strain>cv. Columbia</strain>
    </source>
</reference>
<reference key="6">
    <citation type="submission" date="2006-08" db="EMBL/GenBank/DDBJ databases">
        <title>Arabidopsis ORF Clones.</title>
        <authorList>
            <person name="Quinitio C."/>
            <person name="Chen H."/>
            <person name="Kim C.J."/>
            <person name="Shinn P."/>
            <person name="Ecker J.R."/>
        </authorList>
    </citation>
    <scope>NUCLEOTIDE SEQUENCE [LARGE SCALE MRNA]</scope>
    <source>
        <strain>cv. Columbia</strain>
    </source>
</reference>
<reference key="7">
    <citation type="journal article" date="2003" name="Trends Plant Sci.">
        <title>Growth signalling pathways in Arabidopsis and the AGC protein kinases.</title>
        <authorList>
            <person name="Boegre L."/>
            <person name="Okresz L."/>
            <person name="Henriques R."/>
            <person name="Anthony R.G."/>
        </authorList>
    </citation>
    <scope>GENE FAMILY</scope>
    <scope>REVIEW</scope>
</reference>
<reference key="8">
    <citation type="journal article" date="2006" name="Biochimie">
        <title>Arabidopsis PDK1: identification of sites important for activity and downstream phosphorylation of S6 kinase.</title>
        <authorList>
            <person name="Otterhag L."/>
            <person name="Gustavsson N."/>
            <person name="Alsterfjord M."/>
            <person name="Pical C."/>
            <person name="Lehrach H."/>
            <person name="Gobom J."/>
            <person name="Sommarin M."/>
        </authorList>
    </citation>
    <scope>ACTIVITY REGULATION</scope>
    <scope>PHOSPHORYLATION BY PDK1</scope>
</reference>
<reference key="9">
    <citation type="journal article" date="2012" name="J. Biol. Chem.">
        <title>Rapamycin and glucose-target of rapamycin (TOR) protein signaling in plants.</title>
        <authorList>
            <person name="Xiong Y."/>
            <person name="Sheen J."/>
        </authorList>
    </citation>
    <scope>PHOSPHORYLATION AT THR-455 BY TOR</scope>
</reference>
<reference key="10">
    <citation type="journal article" date="2015" name="J. Exp. Bot.">
        <title>Overexpression of the PP2A regulatory subunit Tap46 leads to enhanced plant growth through stimulation of the TOR signalling pathway.</title>
        <authorList>
            <person name="Ahn C.S."/>
            <person name="Ahn H.K."/>
            <person name="Pai H.S."/>
        </authorList>
    </citation>
    <scope>INTERACTION WITH TAP46</scope>
</reference>
<reference key="11">
    <citation type="journal article" date="2017" name="Plant Cell">
        <title>MRF family genes are involved in translation control, especially under energy-deficient conditions, and their expression and functions are modulated by the TOR signaling pathway.</title>
        <authorList>
            <person name="Lee D.-H."/>
            <person name="Park S.J."/>
            <person name="Ahn C.S."/>
            <person name="Pai H.-S."/>
        </authorList>
    </citation>
    <scope>FUNCTION</scope>
    <scope>INTERACTION WITH MRF1</scope>
    <source>
        <strain>cv. Columbia</strain>
    </source>
</reference>
<keyword id="KW-0067">ATP-binding</keyword>
<keyword id="KW-0418">Kinase</keyword>
<keyword id="KW-0547">Nucleotide-binding</keyword>
<keyword id="KW-0597">Phosphoprotein</keyword>
<keyword id="KW-1185">Reference proteome</keyword>
<keyword id="KW-0723">Serine/threonine-protein kinase</keyword>
<keyword id="KW-0808">Transferase</keyword>
<protein>
    <recommendedName>
        <fullName>Serine/threonine-protein kinase AtPK2/AtPK19</fullName>
        <ecNumber>2.7.11.1</ecNumber>
    </recommendedName>
    <alternativeName>
        <fullName>Ribosomal-protein S6 kinase homolog 2</fullName>
    </alternativeName>
</protein>
<accession>Q39030</accession>
<accession>Q0V851</accession>
<accession>Q949X5</accession>
<accession>Q9C5R1</accession>
<dbReference type="EC" id="2.7.11.1"/>
<dbReference type="EMBL" id="D42061">
    <property type="protein sequence ID" value="BAA07661.1"/>
    <property type="molecule type" value="mRNA"/>
</dbReference>
<dbReference type="EMBL" id="AC012562">
    <property type="protein sequence ID" value="AAG51345.1"/>
    <property type="molecule type" value="Genomic_DNA"/>
</dbReference>
<dbReference type="EMBL" id="CP002686">
    <property type="protein sequence ID" value="AEE74669.1"/>
    <property type="molecule type" value="Genomic_DNA"/>
</dbReference>
<dbReference type="EMBL" id="CP002686">
    <property type="protein sequence ID" value="AEE74670.1"/>
    <property type="molecule type" value="Genomic_DNA"/>
</dbReference>
<dbReference type="EMBL" id="CP002686">
    <property type="protein sequence ID" value="ANM65316.1"/>
    <property type="molecule type" value="Genomic_DNA"/>
</dbReference>
<dbReference type="EMBL" id="CP002686">
    <property type="protein sequence ID" value="ANM65317.1"/>
    <property type="molecule type" value="Genomic_DNA"/>
</dbReference>
<dbReference type="EMBL" id="AF325094">
    <property type="protein sequence ID" value="AAK17162.1"/>
    <property type="molecule type" value="mRNA"/>
</dbReference>
<dbReference type="EMBL" id="AY050826">
    <property type="status" value="NOT_ANNOTATED_CDS"/>
    <property type="molecule type" value="mRNA"/>
</dbReference>
<dbReference type="EMBL" id="AK316712">
    <property type="protein sequence ID" value="BAH19439.1"/>
    <property type="molecule type" value="mRNA"/>
</dbReference>
<dbReference type="EMBL" id="BT026369">
    <property type="protein sequence ID" value="ABH04476.1"/>
    <property type="molecule type" value="mRNA"/>
</dbReference>
<dbReference type="PIR" id="S68463">
    <property type="entry name" value="S68463"/>
</dbReference>
<dbReference type="RefSeq" id="NP_001327294.1">
    <property type="nucleotide sequence ID" value="NM_001337767.1"/>
</dbReference>
<dbReference type="RefSeq" id="NP_001327295.1">
    <property type="nucleotide sequence ID" value="NM_001337766.1"/>
</dbReference>
<dbReference type="RefSeq" id="NP_187484.1">
    <property type="nucleotide sequence ID" value="NM_111706.4"/>
</dbReference>
<dbReference type="RefSeq" id="NP_850543.1">
    <property type="nucleotide sequence ID" value="NM_180212.2"/>
</dbReference>
<dbReference type="SMR" id="Q39030"/>
<dbReference type="BioGRID" id="5354">
    <property type="interactions" value="2"/>
</dbReference>
<dbReference type="FunCoup" id="Q39030">
    <property type="interactions" value="3041"/>
</dbReference>
<dbReference type="STRING" id="3702.Q39030"/>
<dbReference type="iPTMnet" id="Q39030"/>
<dbReference type="PaxDb" id="3702-AT3G08720.2"/>
<dbReference type="ProteomicsDB" id="250702"/>
<dbReference type="EnsemblPlants" id="AT3G08720.1">
    <property type="protein sequence ID" value="AT3G08720.1"/>
    <property type="gene ID" value="AT3G08720"/>
</dbReference>
<dbReference type="EnsemblPlants" id="AT3G08720.2">
    <property type="protein sequence ID" value="AT3G08720.2"/>
    <property type="gene ID" value="AT3G08720"/>
</dbReference>
<dbReference type="EnsemblPlants" id="AT3G08720.3">
    <property type="protein sequence ID" value="AT3G08720.3"/>
    <property type="gene ID" value="AT3G08720"/>
</dbReference>
<dbReference type="EnsemblPlants" id="AT3G08720.4">
    <property type="protein sequence ID" value="AT3G08720.4"/>
    <property type="gene ID" value="AT3G08720"/>
</dbReference>
<dbReference type="GeneID" id="820019"/>
<dbReference type="Gramene" id="AT3G08720.1">
    <property type="protein sequence ID" value="AT3G08720.1"/>
    <property type="gene ID" value="AT3G08720"/>
</dbReference>
<dbReference type="Gramene" id="AT3G08720.2">
    <property type="protein sequence ID" value="AT3G08720.2"/>
    <property type="gene ID" value="AT3G08720"/>
</dbReference>
<dbReference type="Gramene" id="AT3G08720.3">
    <property type="protein sequence ID" value="AT3G08720.3"/>
    <property type="gene ID" value="AT3G08720"/>
</dbReference>
<dbReference type="Gramene" id="AT3G08720.4">
    <property type="protein sequence ID" value="AT3G08720.4"/>
    <property type="gene ID" value="AT3G08720"/>
</dbReference>
<dbReference type="KEGG" id="ath:AT3G08720"/>
<dbReference type="Araport" id="AT3G08720"/>
<dbReference type="TAIR" id="AT3G08720">
    <property type="gene designation" value="S6K2"/>
</dbReference>
<dbReference type="eggNOG" id="KOG0598">
    <property type="taxonomic scope" value="Eukaryota"/>
</dbReference>
<dbReference type="HOGENOM" id="CLU_000288_63_49_1"/>
<dbReference type="InParanoid" id="Q39030"/>
<dbReference type="OMA" id="CVIYDMM"/>
<dbReference type="PhylomeDB" id="Q39030"/>
<dbReference type="BRENDA" id="2.7.11.1">
    <property type="organism ID" value="399"/>
</dbReference>
<dbReference type="PRO" id="PR:Q39030"/>
<dbReference type="Proteomes" id="UP000006548">
    <property type="component" value="Chromosome 3"/>
</dbReference>
<dbReference type="ExpressionAtlas" id="Q39030">
    <property type="expression patterns" value="baseline and differential"/>
</dbReference>
<dbReference type="GO" id="GO:0005634">
    <property type="term" value="C:nucleus"/>
    <property type="evidence" value="ECO:0000314"/>
    <property type="project" value="TAIR"/>
</dbReference>
<dbReference type="GO" id="GO:0005524">
    <property type="term" value="F:ATP binding"/>
    <property type="evidence" value="ECO:0007669"/>
    <property type="project" value="UniProtKB-KW"/>
</dbReference>
<dbReference type="GO" id="GO:0016301">
    <property type="term" value="F:kinase activity"/>
    <property type="evidence" value="ECO:0000314"/>
    <property type="project" value="TAIR"/>
</dbReference>
<dbReference type="GO" id="GO:0004672">
    <property type="term" value="F:protein kinase activity"/>
    <property type="evidence" value="ECO:0000250"/>
    <property type="project" value="TAIR"/>
</dbReference>
<dbReference type="GO" id="GO:0106310">
    <property type="term" value="F:protein serine kinase activity"/>
    <property type="evidence" value="ECO:0007669"/>
    <property type="project" value="RHEA"/>
</dbReference>
<dbReference type="GO" id="GO:0004674">
    <property type="term" value="F:protein serine/threonine kinase activity"/>
    <property type="evidence" value="ECO:0007669"/>
    <property type="project" value="UniProtKB-KW"/>
</dbReference>
<dbReference type="GO" id="GO:0071456">
    <property type="term" value="P:cellular response to hypoxia"/>
    <property type="evidence" value="ECO:0007007"/>
    <property type="project" value="TAIR"/>
</dbReference>
<dbReference type="GO" id="GO:0045727">
    <property type="term" value="P:positive regulation of translation"/>
    <property type="evidence" value="ECO:0000304"/>
    <property type="project" value="TAIR"/>
</dbReference>
<dbReference type="GO" id="GO:0006468">
    <property type="term" value="P:protein phosphorylation"/>
    <property type="evidence" value="ECO:0000314"/>
    <property type="project" value="TAIR"/>
</dbReference>
<dbReference type="GO" id="GO:0009409">
    <property type="term" value="P:response to cold"/>
    <property type="evidence" value="ECO:0000270"/>
    <property type="project" value="TAIR"/>
</dbReference>
<dbReference type="GO" id="GO:0009408">
    <property type="term" value="P:response to heat"/>
    <property type="evidence" value="ECO:0000270"/>
    <property type="project" value="TAIR"/>
</dbReference>
<dbReference type="GO" id="GO:0009651">
    <property type="term" value="P:response to salt stress"/>
    <property type="evidence" value="ECO:0000270"/>
    <property type="project" value="TAIR"/>
</dbReference>
<dbReference type="CDD" id="cd05123">
    <property type="entry name" value="STKc_AGC"/>
    <property type="match status" value="1"/>
</dbReference>
<dbReference type="FunFam" id="1.10.510.10:FF:000297">
    <property type="entry name" value="Non-specific serine/threonine protein kinase"/>
    <property type="match status" value="1"/>
</dbReference>
<dbReference type="FunFam" id="3.30.200.20:FF:000048">
    <property type="entry name" value="Non-specific serine/threonine protein kinase"/>
    <property type="match status" value="1"/>
</dbReference>
<dbReference type="Gene3D" id="3.30.200.20">
    <property type="entry name" value="Phosphorylase Kinase, domain 1"/>
    <property type="match status" value="1"/>
</dbReference>
<dbReference type="Gene3D" id="1.10.510.10">
    <property type="entry name" value="Transferase(Phosphotransferase) domain 1"/>
    <property type="match status" value="1"/>
</dbReference>
<dbReference type="InterPro" id="IPR000961">
    <property type="entry name" value="AGC-kinase_C"/>
</dbReference>
<dbReference type="InterPro" id="IPR011009">
    <property type="entry name" value="Kinase-like_dom_sf"/>
</dbReference>
<dbReference type="InterPro" id="IPR017892">
    <property type="entry name" value="Pkinase_C"/>
</dbReference>
<dbReference type="InterPro" id="IPR000719">
    <property type="entry name" value="Prot_kinase_dom"/>
</dbReference>
<dbReference type="InterPro" id="IPR017441">
    <property type="entry name" value="Protein_kinase_ATP_BS"/>
</dbReference>
<dbReference type="InterPro" id="IPR008271">
    <property type="entry name" value="Ser/Thr_kinase_AS"/>
</dbReference>
<dbReference type="InterPro" id="IPR045270">
    <property type="entry name" value="STKc_AGC"/>
</dbReference>
<dbReference type="PANTHER" id="PTHR24351">
    <property type="entry name" value="RIBOSOMAL PROTEIN S6 KINASE"/>
    <property type="match status" value="1"/>
</dbReference>
<dbReference type="Pfam" id="PF00069">
    <property type="entry name" value="Pkinase"/>
    <property type="match status" value="1"/>
</dbReference>
<dbReference type="Pfam" id="PF00433">
    <property type="entry name" value="Pkinase_C"/>
    <property type="match status" value="1"/>
</dbReference>
<dbReference type="SMART" id="SM00133">
    <property type="entry name" value="S_TK_X"/>
    <property type="match status" value="1"/>
</dbReference>
<dbReference type="SMART" id="SM00220">
    <property type="entry name" value="S_TKc"/>
    <property type="match status" value="1"/>
</dbReference>
<dbReference type="SUPFAM" id="SSF56112">
    <property type="entry name" value="Protein kinase-like (PK-like)"/>
    <property type="match status" value="1"/>
</dbReference>
<dbReference type="PROSITE" id="PS51285">
    <property type="entry name" value="AGC_KINASE_CTER"/>
    <property type="match status" value="1"/>
</dbReference>
<dbReference type="PROSITE" id="PS00107">
    <property type="entry name" value="PROTEIN_KINASE_ATP"/>
    <property type="match status" value="1"/>
</dbReference>
<dbReference type="PROSITE" id="PS50011">
    <property type="entry name" value="PROTEIN_KINASE_DOM"/>
    <property type="match status" value="1"/>
</dbReference>
<dbReference type="PROSITE" id="PS00108">
    <property type="entry name" value="PROTEIN_KINASE_ST"/>
    <property type="match status" value="1"/>
</dbReference>
<feature type="chain" id="PRO_0000086162" description="Serine/threonine-protein kinase AtPK2/AtPK19">
    <location>
        <begin position="1"/>
        <end position="471"/>
    </location>
</feature>
<feature type="domain" description="Protein kinase" evidence="3">
    <location>
        <begin position="140"/>
        <end position="395"/>
    </location>
</feature>
<feature type="domain" description="AGC-kinase C-terminal" evidence="4">
    <location>
        <begin position="396"/>
        <end position="466"/>
    </location>
</feature>
<feature type="region of interest" description="Disordered" evidence="6">
    <location>
        <begin position="1"/>
        <end position="21"/>
    </location>
</feature>
<feature type="region of interest" description="Activation loop" evidence="1">
    <location>
        <begin position="281"/>
        <end position="307"/>
    </location>
</feature>
<feature type="active site" description="Proton acceptor" evidence="3 5">
    <location>
        <position position="263"/>
    </location>
</feature>
<feature type="binding site" evidence="3">
    <location>
        <begin position="146"/>
        <end position="154"/>
    </location>
    <ligand>
        <name>ATP</name>
        <dbReference type="ChEBI" id="CHEBI:30616"/>
    </ligand>
</feature>
<feature type="binding site" evidence="3">
    <location>
        <position position="169"/>
    </location>
    <ligand>
        <name>ATP</name>
        <dbReference type="ChEBI" id="CHEBI:30616"/>
    </ligand>
</feature>
<feature type="modified residue" description="Phosphoserine; by PDPK1" evidence="2">
    <location>
        <position position="296"/>
    </location>
</feature>
<feature type="modified residue" description="Phosphothreonine; by TOR" evidence="8">
    <location>
        <position position="455"/>
    </location>
</feature>
<feature type="sequence conflict" description="In Ref. 1; BAA07661." evidence="11" ref="1">
    <original>A</original>
    <variation>V</variation>
    <location>
        <position position="250"/>
    </location>
</feature>
<feature type="sequence conflict" description="In Ref. 1; BAA07661." evidence="11" ref="1">
    <original>LS</original>
    <variation>VF</variation>
    <location>
        <begin position="359"/>
        <end position="360"/>
    </location>
</feature>
<proteinExistence type="evidence at protein level"/>
<gene>
    <name type="primary">ATPK2</name>
    <name type="synonym">ATPK19</name>
    <name type="synonym">S6K2</name>
    <name type="ordered locus">At3g08720</name>
    <name type="ORF">F17O14.19</name>
</gene>
<organism>
    <name type="scientific">Arabidopsis thaliana</name>
    <name type="common">Mouse-ear cress</name>
    <dbReference type="NCBI Taxonomy" id="3702"/>
    <lineage>
        <taxon>Eukaryota</taxon>
        <taxon>Viridiplantae</taxon>
        <taxon>Streptophyta</taxon>
        <taxon>Embryophyta</taxon>
        <taxon>Tracheophyta</taxon>
        <taxon>Spermatophyta</taxon>
        <taxon>Magnoliopsida</taxon>
        <taxon>eudicotyledons</taxon>
        <taxon>Gunneridae</taxon>
        <taxon>Pentapetalae</taxon>
        <taxon>rosids</taxon>
        <taxon>malvids</taxon>
        <taxon>Brassicales</taxon>
        <taxon>Brassicaceae</taxon>
        <taxon>Camelineae</taxon>
        <taxon>Arabidopsis</taxon>
    </lineage>
</organism>
<comment type="function">
    <text evidence="10">Downstream effector of TOR signaling pathway. May be involved in adaptation of plant to cold or high-salt conditions. Mediates the phosphorylation of MRFs (e.g. MRF1) (PubMed:29084871).</text>
</comment>
<comment type="catalytic activity">
    <reaction>
        <text>L-seryl-[protein] + ATP = O-phospho-L-seryl-[protein] + ADP + H(+)</text>
        <dbReference type="Rhea" id="RHEA:17989"/>
        <dbReference type="Rhea" id="RHEA-COMP:9863"/>
        <dbReference type="Rhea" id="RHEA-COMP:11604"/>
        <dbReference type="ChEBI" id="CHEBI:15378"/>
        <dbReference type="ChEBI" id="CHEBI:29999"/>
        <dbReference type="ChEBI" id="CHEBI:30616"/>
        <dbReference type="ChEBI" id="CHEBI:83421"/>
        <dbReference type="ChEBI" id="CHEBI:456216"/>
        <dbReference type="EC" id="2.7.11.1"/>
    </reaction>
</comment>
<comment type="catalytic activity">
    <reaction>
        <text>L-threonyl-[protein] + ATP = O-phospho-L-threonyl-[protein] + ADP + H(+)</text>
        <dbReference type="Rhea" id="RHEA:46608"/>
        <dbReference type="Rhea" id="RHEA-COMP:11060"/>
        <dbReference type="Rhea" id="RHEA-COMP:11605"/>
        <dbReference type="ChEBI" id="CHEBI:15378"/>
        <dbReference type="ChEBI" id="CHEBI:30013"/>
        <dbReference type="ChEBI" id="CHEBI:30616"/>
        <dbReference type="ChEBI" id="CHEBI:61977"/>
        <dbReference type="ChEBI" id="CHEBI:456216"/>
        <dbReference type="EC" id="2.7.11.1"/>
    </reaction>
</comment>
<comment type="activity regulation">
    <text evidence="7">Activated by PDK1.</text>
</comment>
<comment type="subunit">
    <text evidence="9 10">Interacts with TAP46 (PubMed:25399018). Binds to MRF1 (PubMed:29084871).</text>
</comment>
<comment type="domain">
    <text evidence="1">The activation loop within the kinase domain is the target of phosphorylation.</text>
</comment>
<comment type="PTM">
    <text evidence="1 7 8">Undergoes serine-specific autophosphorylation (By similarity). Phosphorylated at Thr-455 by TOR.</text>
</comment>
<comment type="similarity">
    <text evidence="11">Belongs to the protein kinase superfamily. AGC Ser/Thr protein kinase family. S6 kinase subfamily.</text>
</comment>
<comment type="sequence caution" evidence="11">
    <conflict type="frameshift">
        <sequence resource="EMBL" id="AY050826"/>
    </conflict>
</comment>